<protein>
    <recommendedName>
        <fullName evidence="1">Large ribosomal subunit protein uL29</fullName>
    </recommendedName>
    <alternativeName>
        <fullName evidence="2">50S ribosomal protein L29</fullName>
    </alternativeName>
</protein>
<sequence>MLKSFKNFTLEDMKAKRLELKKEYLDLRFKSIVGHVENPLKKREIRRDIARLNTIICEYELGIRKV</sequence>
<evidence type="ECO:0000255" key="1">
    <source>
        <dbReference type="HAMAP-Rule" id="MF_00374"/>
    </source>
</evidence>
<evidence type="ECO:0000305" key="2"/>
<gene>
    <name evidence="1" type="primary">rpmC</name>
    <name type="ordered locus">BG0498</name>
</gene>
<name>RL29_BORGP</name>
<proteinExistence type="inferred from homology"/>
<organism>
    <name type="scientific">Borrelia garinii subsp. bavariensis (strain ATCC BAA-2496 / DSM 23469 / PBi)</name>
    <name type="common">Borreliella bavariensis</name>
    <dbReference type="NCBI Taxonomy" id="290434"/>
    <lineage>
        <taxon>Bacteria</taxon>
        <taxon>Pseudomonadati</taxon>
        <taxon>Spirochaetota</taxon>
        <taxon>Spirochaetia</taxon>
        <taxon>Spirochaetales</taxon>
        <taxon>Borreliaceae</taxon>
        <taxon>Borreliella</taxon>
    </lineage>
</organism>
<reference key="1">
    <citation type="journal article" date="2004" name="Nucleic Acids Res.">
        <title>Comparative analysis of the Borrelia garinii genome.</title>
        <authorList>
            <person name="Gloeckner G."/>
            <person name="Lehmann R."/>
            <person name="Romualdi A."/>
            <person name="Pradella S."/>
            <person name="Schulte-Spechtel U."/>
            <person name="Schilhabel M."/>
            <person name="Wilske B."/>
            <person name="Suehnel J."/>
            <person name="Platzer M."/>
        </authorList>
    </citation>
    <scope>NUCLEOTIDE SEQUENCE [LARGE SCALE GENOMIC DNA]</scope>
    <source>
        <strain>ATCC BAA-2496 / DSM 23469 / PBi</strain>
    </source>
</reference>
<keyword id="KW-0687">Ribonucleoprotein</keyword>
<keyword id="KW-0689">Ribosomal protein</keyword>
<dbReference type="EMBL" id="CP000013">
    <property type="protein sequence ID" value="AAU07337.1"/>
    <property type="molecule type" value="Genomic_DNA"/>
</dbReference>
<dbReference type="RefSeq" id="WP_011193805.1">
    <property type="nucleotide sequence ID" value="NZ_CP028872.1"/>
</dbReference>
<dbReference type="SMR" id="Q661D4"/>
<dbReference type="GeneID" id="45161281"/>
<dbReference type="KEGG" id="bga:BG0498"/>
<dbReference type="eggNOG" id="COG0255">
    <property type="taxonomic scope" value="Bacteria"/>
</dbReference>
<dbReference type="HOGENOM" id="CLU_158491_5_0_12"/>
<dbReference type="OrthoDB" id="371096at2"/>
<dbReference type="Proteomes" id="UP000002276">
    <property type="component" value="Chromosome"/>
</dbReference>
<dbReference type="GO" id="GO:1990904">
    <property type="term" value="C:ribonucleoprotein complex"/>
    <property type="evidence" value="ECO:0007669"/>
    <property type="project" value="UniProtKB-KW"/>
</dbReference>
<dbReference type="GO" id="GO:0005840">
    <property type="term" value="C:ribosome"/>
    <property type="evidence" value="ECO:0007669"/>
    <property type="project" value="UniProtKB-KW"/>
</dbReference>
<dbReference type="GO" id="GO:0003735">
    <property type="term" value="F:structural constituent of ribosome"/>
    <property type="evidence" value="ECO:0007669"/>
    <property type="project" value="InterPro"/>
</dbReference>
<dbReference type="GO" id="GO:0006412">
    <property type="term" value="P:translation"/>
    <property type="evidence" value="ECO:0007669"/>
    <property type="project" value="UniProtKB-UniRule"/>
</dbReference>
<dbReference type="CDD" id="cd00427">
    <property type="entry name" value="Ribosomal_L29_HIP"/>
    <property type="match status" value="1"/>
</dbReference>
<dbReference type="Gene3D" id="1.10.287.310">
    <property type="match status" value="1"/>
</dbReference>
<dbReference type="HAMAP" id="MF_00374">
    <property type="entry name" value="Ribosomal_uL29"/>
    <property type="match status" value="1"/>
</dbReference>
<dbReference type="InterPro" id="IPR001854">
    <property type="entry name" value="Ribosomal_uL29"/>
</dbReference>
<dbReference type="InterPro" id="IPR036049">
    <property type="entry name" value="Ribosomal_uL29_sf"/>
</dbReference>
<dbReference type="NCBIfam" id="TIGR00012">
    <property type="entry name" value="L29"/>
    <property type="match status" value="1"/>
</dbReference>
<dbReference type="Pfam" id="PF00831">
    <property type="entry name" value="Ribosomal_L29"/>
    <property type="match status" value="1"/>
</dbReference>
<dbReference type="SUPFAM" id="SSF46561">
    <property type="entry name" value="Ribosomal protein L29 (L29p)"/>
    <property type="match status" value="1"/>
</dbReference>
<accession>Q661D4</accession>
<feature type="chain" id="PRO_1000007423" description="Large ribosomal subunit protein uL29">
    <location>
        <begin position="1"/>
        <end position="66"/>
    </location>
</feature>
<comment type="similarity">
    <text evidence="1">Belongs to the universal ribosomal protein uL29 family.</text>
</comment>